<proteinExistence type="inferred from homology"/>
<feature type="chain" id="PRO_0000353441" description="DNA-directed RNA polymerase subunit beta'">
    <location>
        <begin position="1"/>
        <end position="1427"/>
    </location>
</feature>
<feature type="region of interest" description="Disordered" evidence="2">
    <location>
        <begin position="1394"/>
        <end position="1427"/>
    </location>
</feature>
<feature type="compositionally biased region" description="Basic and acidic residues" evidence="2">
    <location>
        <begin position="1417"/>
        <end position="1427"/>
    </location>
</feature>
<feature type="binding site" evidence="1">
    <location>
        <position position="70"/>
    </location>
    <ligand>
        <name>Zn(2+)</name>
        <dbReference type="ChEBI" id="CHEBI:29105"/>
        <label>1</label>
    </ligand>
</feature>
<feature type="binding site" evidence="1">
    <location>
        <position position="72"/>
    </location>
    <ligand>
        <name>Zn(2+)</name>
        <dbReference type="ChEBI" id="CHEBI:29105"/>
        <label>1</label>
    </ligand>
</feature>
<feature type="binding site" evidence="1">
    <location>
        <position position="85"/>
    </location>
    <ligand>
        <name>Zn(2+)</name>
        <dbReference type="ChEBI" id="CHEBI:29105"/>
        <label>1</label>
    </ligand>
</feature>
<feature type="binding site" evidence="1">
    <location>
        <position position="88"/>
    </location>
    <ligand>
        <name>Zn(2+)</name>
        <dbReference type="ChEBI" id="CHEBI:29105"/>
        <label>1</label>
    </ligand>
</feature>
<feature type="binding site" evidence="1">
    <location>
        <position position="461"/>
    </location>
    <ligand>
        <name>Mg(2+)</name>
        <dbReference type="ChEBI" id="CHEBI:18420"/>
    </ligand>
</feature>
<feature type="binding site" evidence="1">
    <location>
        <position position="463"/>
    </location>
    <ligand>
        <name>Mg(2+)</name>
        <dbReference type="ChEBI" id="CHEBI:18420"/>
    </ligand>
</feature>
<feature type="binding site" evidence="1">
    <location>
        <position position="465"/>
    </location>
    <ligand>
        <name>Mg(2+)</name>
        <dbReference type="ChEBI" id="CHEBI:18420"/>
    </ligand>
</feature>
<feature type="binding site" evidence="1">
    <location>
        <position position="809"/>
    </location>
    <ligand>
        <name>Zn(2+)</name>
        <dbReference type="ChEBI" id="CHEBI:29105"/>
        <label>2</label>
    </ligand>
</feature>
<feature type="binding site" evidence="1">
    <location>
        <position position="882"/>
    </location>
    <ligand>
        <name>Zn(2+)</name>
        <dbReference type="ChEBI" id="CHEBI:29105"/>
        <label>2</label>
    </ligand>
</feature>
<feature type="binding site" evidence="1">
    <location>
        <position position="889"/>
    </location>
    <ligand>
        <name>Zn(2+)</name>
        <dbReference type="ChEBI" id="CHEBI:29105"/>
        <label>2</label>
    </ligand>
</feature>
<feature type="binding site" evidence="1">
    <location>
        <position position="892"/>
    </location>
    <ligand>
        <name>Zn(2+)</name>
        <dbReference type="ChEBI" id="CHEBI:29105"/>
        <label>2</label>
    </ligand>
</feature>
<sequence length="1427" mass="158095">MNQLTNFMNPVAKPETFDMIKIGIASPERIRSWSFGEIKKPETINYRTFKPERDGLFCARIFGPIKDYECLCGKYKRMKYKGIVCEKCGVEVTVTKVRRERMGHIELAAPVAHIWFLKSLPSRIGLLLDMQLKQLERVLYFEAYIVLEPGLTPLEKFQLLTEDELLDAQDEYGEDAFSAGIGAEAIRTLLENLDLEQERTDLMEELATTKSELKPKKIIKRLKVVESFIESGNRPEWMILEVVPVIPPELRPLVPLDGGRFATSDLNDLYRRVINRNNRLKRLMELRAPDIIVRNEKRMLQEAVDALFDNGRRGRTITGANKRPLKSLSDMLKGKQGRFRQNLLGKRVDYSGRSVIVTGPELKLHQCGLPKKMALELFKPFIYARLDAKGLSMTLKQAKKWVEKERKEVWDILDEVIREHPVLLNRAPTLHRLGIQAFEPVLIEGKAIQLHPLVCAAFNADFDGDQMAVHVPLSLEAQLEARVLMMSTNNILSPANGKPIIVPSQDMVLGLYYLSLEREGEPGEGMLLADMAEVHQALHIGAVTLHSKIISRVPQTDEKGNEYLKRFETTPGRMLIGECLPKSHTVPFDVVNRLLTKKEIGDVIDQVYRHTGQKETVLFADAIMALGFRHAFKAGISFGKDDMIIPASKEQLVDETRSLVKDFEQQYQDGLITQQEKYNKAIDAWSQCGDKVANAMMDEIRATPKLPDGRLAPINSIYMMAHSGARGSQAQMKQLAGMRGLMAKPSGEIIETPIISNFKEGLTVLEYFNSTHGARKGLADTALKTANSGYLTRRLVDVSQDCVVIEEDCGTTRGMEMRAIIQGGSTIASLGERILGRTTLEDVVDKDGNVIAPVGTLLDEATTQRIEEAEVQSVKIRSPLVCEATLGVCGKCYGRDLARGTPVNIGEAVGVIAAQSIGEPGTQLTMRTFHIGGAAQVNEQSNVEAISDGTIEYRDMATIVDQRGRRLALSRSGEIAIIDSEGRERASHKLPYGAQIMHKDGEKVKKGDRIAEWDPFTMPLITEKQGVVKYQDLIDGKTLTEQVDEATGIAQRVVIEYRAAGRSKKEDLQPRITLLDDASGEAARYLLAVGTMISVEDGQTVQAGDVLARVSREASKTRDITGGLPRVAELFEARIPKDNSVIAKISGRIEFVKDYKAKRKIAIVPEEGDPIEYLIPKSKVLEVQEGDMVKRGDALISGSPNPHDILDVMGVEALAEYLVAEIQEVYRLQGVKINDKHIEVIVRQMLQKVEITDGGDTTLLPGEQLDYLEMMEYNAKLPKNGKPAEGRPVLLGITKASLQTRSFVSAASFQETTRVLTEASVQGKVDSLQGLKENVIVGRLIPAGTGAAMNRVRVTASSKDAALRAAMRVANQEHLIAPRTAAEEHAAELAQGPEAAIGDDPLGKVQGEDFTTDDVMVEERPEGASEE</sequence>
<reference key="1">
    <citation type="journal article" date="2009" name="Proc. Natl. Acad. Sci. U.S.A.">
        <title>The genomic basis of trophic strategy in marine bacteria.</title>
        <authorList>
            <person name="Lauro F.M."/>
            <person name="McDougald D."/>
            <person name="Thomas T."/>
            <person name="Williams T.J."/>
            <person name="Egan S."/>
            <person name="Rice S."/>
            <person name="DeMaere M.Z."/>
            <person name="Ting L."/>
            <person name="Ertan H."/>
            <person name="Johnson J."/>
            <person name="Ferriera S."/>
            <person name="Lapidus A."/>
            <person name="Anderson I."/>
            <person name="Kyrpides N."/>
            <person name="Munk A.C."/>
            <person name="Detter C."/>
            <person name="Han C.S."/>
            <person name="Brown M.V."/>
            <person name="Robb F.T."/>
            <person name="Kjelleberg S."/>
            <person name="Cavicchioli R."/>
        </authorList>
    </citation>
    <scope>NUCLEOTIDE SEQUENCE [LARGE SCALE GENOMIC DNA]</scope>
    <source>
        <strain>DSM 13593 / LMG 18877 / RB2256</strain>
    </source>
</reference>
<evidence type="ECO:0000255" key="1">
    <source>
        <dbReference type="HAMAP-Rule" id="MF_01322"/>
    </source>
</evidence>
<evidence type="ECO:0000256" key="2">
    <source>
        <dbReference type="SAM" id="MobiDB-lite"/>
    </source>
</evidence>
<protein>
    <recommendedName>
        <fullName evidence="1">DNA-directed RNA polymerase subunit beta'</fullName>
        <shortName evidence="1">RNAP subunit beta'</shortName>
        <ecNumber evidence="1">2.7.7.6</ecNumber>
    </recommendedName>
    <alternativeName>
        <fullName evidence="1">RNA polymerase subunit beta'</fullName>
    </alternativeName>
    <alternativeName>
        <fullName evidence="1">Transcriptase subunit beta'</fullName>
    </alternativeName>
</protein>
<name>RPOC_SPHAL</name>
<organism>
    <name type="scientific">Sphingopyxis alaskensis (strain DSM 13593 / LMG 18877 / RB2256)</name>
    <name type="common">Sphingomonas alaskensis</name>
    <dbReference type="NCBI Taxonomy" id="317655"/>
    <lineage>
        <taxon>Bacteria</taxon>
        <taxon>Pseudomonadati</taxon>
        <taxon>Pseudomonadota</taxon>
        <taxon>Alphaproteobacteria</taxon>
        <taxon>Sphingomonadales</taxon>
        <taxon>Sphingomonadaceae</taxon>
        <taxon>Sphingopyxis</taxon>
    </lineage>
</organism>
<gene>
    <name evidence="1" type="primary">rpoC</name>
    <name type="ordered locus">Sala_1485</name>
</gene>
<accession>Q1GT24</accession>
<dbReference type="EC" id="2.7.7.6" evidence="1"/>
<dbReference type="EMBL" id="CP000356">
    <property type="protein sequence ID" value="ABF53198.1"/>
    <property type="molecule type" value="Genomic_DNA"/>
</dbReference>
<dbReference type="RefSeq" id="WP_011541778.1">
    <property type="nucleotide sequence ID" value="NC_008048.1"/>
</dbReference>
<dbReference type="SMR" id="Q1GT24"/>
<dbReference type="STRING" id="317655.Sala_1485"/>
<dbReference type="KEGG" id="sal:Sala_1485"/>
<dbReference type="eggNOG" id="COG0086">
    <property type="taxonomic scope" value="Bacteria"/>
</dbReference>
<dbReference type="HOGENOM" id="CLU_000524_3_1_5"/>
<dbReference type="OrthoDB" id="9815296at2"/>
<dbReference type="Proteomes" id="UP000006578">
    <property type="component" value="Chromosome"/>
</dbReference>
<dbReference type="GO" id="GO:0000428">
    <property type="term" value="C:DNA-directed RNA polymerase complex"/>
    <property type="evidence" value="ECO:0007669"/>
    <property type="project" value="UniProtKB-KW"/>
</dbReference>
<dbReference type="GO" id="GO:0003677">
    <property type="term" value="F:DNA binding"/>
    <property type="evidence" value="ECO:0007669"/>
    <property type="project" value="UniProtKB-UniRule"/>
</dbReference>
<dbReference type="GO" id="GO:0003899">
    <property type="term" value="F:DNA-directed RNA polymerase activity"/>
    <property type="evidence" value="ECO:0007669"/>
    <property type="project" value="UniProtKB-UniRule"/>
</dbReference>
<dbReference type="GO" id="GO:0000287">
    <property type="term" value="F:magnesium ion binding"/>
    <property type="evidence" value="ECO:0007669"/>
    <property type="project" value="UniProtKB-UniRule"/>
</dbReference>
<dbReference type="GO" id="GO:0008270">
    <property type="term" value="F:zinc ion binding"/>
    <property type="evidence" value="ECO:0007669"/>
    <property type="project" value="UniProtKB-UniRule"/>
</dbReference>
<dbReference type="GO" id="GO:0006351">
    <property type="term" value="P:DNA-templated transcription"/>
    <property type="evidence" value="ECO:0007669"/>
    <property type="project" value="UniProtKB-UniRule"/>
</dbReference>
<dbReference type="CDD" id="cd02655">
    <property type="entry name" value="RNAP_beta'_C"/>
    <property type="match status" value="1"/>
</dbReference>
<dbReference type="CDD" id="cd01609">
    <property type="entry name" value="RNAP_beta'_N"/>
    <property type="match status" value="1"/>
</dbReference>
<dbReference type="FunFam" id="4.10.860.120:FF:000001">
    <property type="entry name" value="DNA-directed RNA polymerase subunit beta"/>
    <property type="match status" value="1"/>
</dbReference>
<dbReference type="Gene3D" id="1.10.132.30">
    <property type="match status" value="1"/>
</dbReference>
<dbReference type="Gene3D" id="1.10.150.390">
    <property type="match status" value="1"/>
</dbReference>
<dbReference type="Gene3D" id="1.10.1790.20">
    <property type="match status" value="1"/>
</dbReference>
<dbReference type="Gene3D" id="1.10.40.90">
    <property type="match status" value="1"/>
</dbReference>
<dbReference type="Gene3D" id="2.40.40.20">
    <property type="match status" value="1"/>
</dbReference>
<dbReference type="Gene3D" id="2.40.50.100">
    <property type="match status" value="3"/>
</dbReference>
<dbReference type="Gene3D" id="4.10.860.120">
    <property type="entry name" value="RNA polymerase II, clamp domain"/>
    <property type="match status" value="1"/>
</dbReference>
<dbReference type="Gene3D" id="1.10.274.100">
    <property type="entry name" value="RNA polymerase Rpb1, domain 3"/>
    <property type="match status" value="2"/>
</dbReference>
<dbReference type="HAMAP" id="MF_01322">
    <property type="entry name" value="RNApol_bact_RpoC"/>
    <property type="match status" value="1"/>
</dbReference>
<dbReference type="InterPro" id="IPR045867">
    <property type="entry name" value="DNA-dir_RpoC_beta_prime"/>
</dbReference>
<dbReference type="InterPro" id="IPR012754">
    <property type="entry name" value="DNA-dir_RpoC_beta_prime_bact"/>
</dbReference>
<dbReference type="InterPro" id="IPR000722">
    <property type="entry name" value="RNA_pol_asu"/>
</dbReference>
<dbReference type="InterPro" id="IPR006592">
    <property type="entry name" value="RNA_pol_N"/>
</dbReference>
<dbReference type="InterPro" id="IPR007080">
    <property type="entry name" value="RNA_pol_Rpb1_1"/>
</dbReference>
<dbReference type="InterPro" id="IPR007066">
    <property type="entry name" value="RNA_pol_Rpb1_3"/>
</dbReference>
<dbReference type="InterPro" id="IPR042102">
    <property type="entry name" value="RNA_pol_Rpb1_3_sf"/>
</dbReference>
<dbReference type="InterPro" id="IPR007083">
    <property type="entry name" value="RNA_pol_Rpb1_4"/>
</dbReference>
<dbReference type="InterPro" id="IPR007081">
    <property type="entry name" value="RNA_pol_Rpb1_5"/>
</dbReference>
<dbReference type="InterPro" id="IPR044893">
    <property type="entry name" value="RNA_pol_Rpb1_clamp_domain"/>
</dbReference>
<dbReference type="InterPro" id="IPR038120">
    <property type="entry name" value="Rpb1_funnel_sf"/>
</dbReference>
<dbReference type="NCBIfam" id="TIGR02386">
    <property type="entry name" value="rpoC_TIGR"/>
    <property type="match status" value="1"/>
</dbReference>
<dbReference type="PANTHER" id="PTHR19376">
    <property type="entry name" value="DNA-DIRECTED RNA POLYMERASE"/>
    <property type="match status" value="1"/>
</dbReference>
<dbReference type="PANTHER" id="PTHR19376:SF54">
    <property type="entry name" value="DNA-DIRECTED RNA POLYMERASE SUBUNIT BETA"/>
    <property type="match status" value="1"/>
</dbReference>
<dbReference type="Pfam" id="PF04997">
    <property type="entry name" value="RNA_pol_Rpb1_1"/>
    <property type="match status" value="1"/>
</dbReference>
<dbReference type="Pfam" id="PF00623">
    <property type="entry name" value="RNA_pol_Rpb1_2"/>
    <property type="match status" value="1"/>
</dbReference>
<dbReference type="Pfam" id="PF04983">
    <property type="entry name" value="RNA_pol_Rpb1_3"/>
    <property type="match status" value="1"/>
</dbReference>
<dbReference type="Pfam" id="PF05000">
    <property type="entry name" value="RNA_pol_Rpb1_4"/>
    <property type="match status" value="1"/>
</dbReference>
<dbReference type="Pfam" id="PF04998">
    <property type="entry name" value="RNA_pol_Rpb1_5"/>
    <property type="match status" value="1"/>
</dbReference>
<dbReference type="SMART" id="SM00663">
    <property type="entry name" value="RPOLA_N"/>
    <property type="match status" value="1"/>
</dbReference>
<dbReference type="SUPFAM" id="SSF64484">
    <property type="entry name" value="beta and beta-prime subunits of DNA dependent RNA-polymerase"/>
    <property type="match status" value="1"/>
</dbReference>
<comment type="function">
    <text evidence="1">DNA-dependent RNA polymerase catalyzes the transcription of DNA into RNA using the four ribonucleoside triphosphates as substrates.</text>
</comment>
<comment type="catalytic activity">
    <reaction evidence="1">
        <text>RNA(n) + a ribonucleoside 5'-triphosphate = RNA(n+1) + diphosphate</text>
        <dbReference type="Rhea" id="RHEA:21248"/>
        <dbReference type="Rhea" id="RHEA-COMP:14527"/>
        <dbReference type="Rhea" id="RHEA-COMP:17342"/>
        <dbReference type="ChEBI" id="CHEBI:33019"/>
        <dbReference type="ChEBI" id="CHEBI:61557"/>
        <dbReference type="ChEBI" id="CHEBI:140395"/>
        <dbReference type="EC" id="2.7.7.6"/>
    </reaction>
</comment>
<comment type="cofactor">
    <cofactor evidence="1">
        <name>Mg(2+)</name>
        <dbReference type="ChEBI" id="CHEBI:18420"/>
    </cofactor>
    <text evidence="1">Binds 1 Mg(2+) ion per subunit.</text>
</comment>
<comment type="cofactor">
    <cofactor evidence="1">
        <name>Zn(2+)</name>
        <dbReference type="ChEBI" id="CHEBI:29105"/>
    </cofactor>
    <text evidence="1">Binds 2 Zn(2+) ions per subunit.</text>
</comment>
<comment type="subunit">
    <text evidence="1">The RNAP catalytic core consists of 2 alpha, 1 beta, 1 beta' and 1 omega subunit. When a sigma factor is associated with the core the holoenzyme is formed, which can initiate transcription.</text>
</comment>
<comment type="similarity">
    <text evidence="1">Belongs to the RNA polymerase beta' chain family.</text>
</comment>
<keyword id="KW-0240">DNA-directed RNA polymerase</keyword>
<keyword id="KW-0460">Magnesium</keyword>
<keyword id="KW-0479">Metal-binding</keyword>
<keyword id="KW-0548">Nucleotidyltransferase</keyword>
<keyword id="KW-1185">Reference proteome</keyword>
<keyword id="KW-0804">Transcription</keyword>
<keyword id="KW-0808">Transferase</keyword>
<keyword id="KW-0862">Zinc</keyword>